<proteinExistence type="evidence at transcript level"/>
<organism>
    <name type="scientific">Arabidopsis thaliana</name>
    <name type="common">Mouse-ear cress</name>
    <dbReference type="NCBI Taxonomy" id="3702"/>
    <lineage>
        <taxon>Eukaryota</taxon>
        <taxon>Viridiplantae</taxon>
        <taxon>Streptophyta</taxon>
        <taxon>Embryophyta</taxon>
        <taxon>Tracheophyta</taxon>
        <taxon>Spermatophyta</taxon>
        <taxon>Magnoliopsida</taxon>
        <taxon>eudicotyledons</taxon>
        <taxon>Gunneridae</taxon>
        <taxon>Pentapetalae</taxon>
        <taxon>rosids</taxon>
        <taxon>malvids</taxon>
        <taxon>Brassicales</taxon>
        <taxon>Brassicaceae</taxon>
        <taxon>Camelineae</taxon>
        <taxon>Arabidopsis</taxon>
    </lineage>
</organism>
<dbReference type="EMBL" id="AB005246">
    <property type="protein sequence ID" value="BAB09834.1"/>
    <property type="molecule type" value="Genomic_DNA"/>
</dbReference>
<dbReference type="EMBL" id="CP002688">
    <property type="protein sequence ID" value="AED97356.1"/>
    <property type="molecule type" value="Genomic_DNA"/>
</dbReference>
<dbReference type="EMBL" id="CP002688">
    <property type="protein sequence ID" value="ANM69005.1"/>
    <property type="molecule type" value="Genomic_DNA"/>
</dbReference>
<dbReference type="EMBL" id="AY085261">
    <property type="protein sequence ID" value="AAM62493.1"/>
    <property type="molecule type" value="mRNA"/>
</dbReference>
<dbReference type="RefSeq" id="NP_001330715.1">
    <property type="nucleotide sequence ID" value="NM_001345429.1"/>
</dbReference>
<dbReference type="RefSeq" id="NP_200869.1">
    <property type="nucleotide sequence ID" value="NM_125454.3"/>
</dbReference>
<dbReference type="FunCoup" id="Q9FF58">
    <property type="interactions" value="202"/>
</dbReference>
<dbReference type="STRING" id="3702.Q9FF58"/>
<dbReference type="iPTMnet" id="Q9FF58"/>
<dbReference type="PaxDb" id="3702-AT5G60610.1"/>
<dbReference type="ProteomicsDB" id="230886"/>
<dbReference type="EnsemblPlants" id="AT5G60610.1">
    <property type="protein sequence ID" value="AT5G60610.1"/>
    <property type="gene ID" value="AT5G60610"/>
</dbReference>
<dbReference type="EnsemblPlants" id="AT5G60610.2">
    <property type="protein sequence ID" value="AT5G60610.2"/>
    <property type="gene ID" value="AT5G60610"/>
</dbReference>
<dbReference type="GeneID" id="836182"/>
<dbReference type="Gramene" id="AT5G60610.1">
    <property type="protein sequence ID" value="AT5G60610.1"/>
    <property type="gene ID" value="AT5G60610"/>
</dbReference>
<dbReference type="Gramene" id="AT5G60610.2">
    <property type="protein sequence ID" value="AT5G60610.2"/>
    <property type="gene ID" value="AT5G60610"/>
</dbReference>
<dbReference type="KEGG" id="ath:AT5G60610"/>
<dbReference type="Araport" id="AT5G60610"/>
<dbReference type="TAIR" id="AT5G60610"/>
<dbReference type="HOGENOM" id="CLU_010721_1_2_1"/>
<dbReference type="InParanoid" id="Q9FF58"/>
<dbReference type="OMA" id="IRIECTL"/>
<dbReference type="PhylomeDB" id="Q9FF58"/>
<dbReference type="PRO" id="PR:Q9FF58"/>
<dbReference type="Proteomes" id="UP000006548">
    <property type="component" value="Chromosome 5"/>
</dbReference>
<dbReference type="ExpressionAtlas" id="Q9FF58">
    <property type="expression patterns" value="baseline and differential"/>
</dbReference>
<dbReference type="CDD" id="cd22160">
    <property type="entry name" value="F-box_AtFBL13-like"/>
    <property type="match status" value="1"/>
</dbReference>
<dbReference type="Gene3D" id="1.20.1280.50">
    <property type="match status" value="1"/>
</dbReference>
<dbReference type="Gene3D" id="3.80.10.10">
    <property type="entry name" value="Ribonuclease Inhibitor"/>
    <property type="match status" value="1"/>
</dbReference>
<dbReference type="InterPro" id="IPR036047">
    <property type="entry name" value="F-box-like_dom_sf"/>
</dbReference>
<dbReference type="InterPro" id="IPR053781">
    <property type="entry name" value="F-box_AtFBL13-like"/>
</dbReference>
<dbReference type="InterPro" id="IPR001810">
    <property type="entry name" value="F-box_dom"/>
</dbReference>
<dbReference type="InterPro" id="IPR006566">
    <property type="entry name" value="FBD"/>
</dbReference>
<dbReference type="InterPro" id="IPR050232">
    <property type="entry name" value="FBL13/AtMIF1-like"/>
</dbReference>
<dbReference type="InterPro" id="IPR032675">
    <property type="entry name" value="LRR_dom_sf"/>
</dbReference>
<dbReference type="InterPro" id="IPR055411">
    <property type="entry name" value="LRR_FXL15/At3g58940/PEG3-like"/>
</dbReference>
<dbReference type="PANTHER" id="PTHR31900">
    <property type="entry name" value="F-BOX/RNI SUPERFAMILY PROTEIN-RELATED"/>
    <property type="match status" value="1"/>
</dbReference>
<dbReference type="PANTHER" id="PTHR31900:SF28">
    <property type="entry name" value="FBD DOMAIN-CONTAINING PROTEIN"/>
    <property type="match status" value="1"/>
</dbReference>
<dbReference type="Pfam" id="PF00646">
    <property type="entry name" value="F-box"/>
    <property type="match status" value="1"/>
</dbReference>
<dbReference type="Pfam" id="PF08387">
    <property type="entry name" value="FBD"/>
    <property type="match status" value="1"/>
</dbReference>
<dbReference type="Pfam" id="PF24758">
    <property type="entry name" value="LRR_At5g56370"/>
    <property type="match status" value="1"/>
</dbReference>
<dbReference type="SMART" id="SM00256">
    <property type="entry name" value="FBOX"/>
    <property type="match status" value="1"/>
</dbReference>
<dbReference type="SUPFAM" id="SSF81383">
    <property type="entry name" value="F-box domain"/>
    <property type="match status" value="1"/>
</dbReference>
<dbReference type="SUPFAM" id="SSF52047">
    <property type="entry name" value="RNI-like"/>
    <property type="match status" value="1"/>
</dbReference>
<dbReference type="PROSITE" id="PS50181">
    <property type="entry name" value="FBOX"/>
    <property type="match status" value="1"/>
</dbReference>
<sequence>MDRISGLPDELLVKIISFVPTKVAVSTSILSKRWESLWKWVPKLECDCTEPALRDFILKNLPLQARIIESLYLRFRRESFLFQDIKLWGGIAISHCLRELRIDFFSHYANPYVILPRSLYTCKSLVTLKLLGLGIRVDVPRDVCLPSLKTLLLQCVAYSEEDPLRLLLSCCPVLEDLVIELDDANQNVKALVVIVPTLQCLSLKIPASCSDERYLIVTPSLKYFKVEDDREIFNALIENMPELEEADIYVTQHIETLLESVTSVKRLTLRQLYNSIDEYKCRAGIVFKQLEQLELSICSDNWTKLVIWLLQNSPNLRVLNLDADSDYERYEEYEQDNWKNIQRSVPKCLKSSLKTLEFAGYTARPEERDFLSFIFKKARCLKTSSISH</sequence>
<accession>Q9FF58</accession>
<gene>
    <name type="ordered locus">At5g60610</name>
    <name type="ORF">MUP24.3</name>
</gene>
<feature type="chain" id="PRO_0000283162" description="FBD-associated F-box protein At5g60610">
    <location>
        <begin position="1"/>
        <end position="388"/>
    </location>
</feature>
<feature type="domain" description="F-box" evidence="1">
    <location>
        <begin position="1"/>
        <end position="47"/>
    </location>
</feature>
<feature type="domain" description="FBD">
    <location>
        <begin position="337"/>
        <end position="388"/>
    </location>
</feature>
<evidence type="ECO:0000255" key="1">
    <source>
        <dbReference type="PROSITE-ProRule" id="PRU00080"/>
    </source>
</evidence>
<protein>
    <recommendedName>
        <fullName>FBD-associated F-box protein At5g60610</fullName>
    </recommendedName>
</protein>
<keyword id="KW-1185">Reference proteome</keyword>
<name>FBD30_ARATH</name>
<reference key="1">
    <citation type="journal article" date="1997" name="DNA Res.">
        <title>Structural analysis of Arabidopsis thaliana chromosome 5. I. Sequence features of the 1.6 Mb regions covered by twenty physically assigned P1 clones.</title>
        <authorList>
            <person name="Sato S."/>
            <person name="Kotani H."/>
            <person name="Nakamura Y."/>
            <person name="Kaneko T."/>
            <person name="Asamizu E."/>
            <person name="Fukami M."/>
            <person name="Miyajima N."/>
            <person name="Tabata S."/>
        </authorList>
    </citation>
    <scope>NUCLEOTIDE SEQUENCE [LARGE SCALE GENOMIC DNA]</scope>
    <source>
        <strain>cv. Columbia</strain>
    </source>
</reference>
<reference key="2">
    <citation type="journal article" date="2017" name="Plant J.">
        <title>Araport11: a complete reannotation of the Arabidopsis thaliana reference genome.</title>
        <authorList>
            <person name="Cheng C.Y."/>
            <person name="Krishnakumar V."/>
            <person name="Chan A.P."/>
            <person name="Thibaud-Nissen F."/>
            <person name="Schobel S."/>
            <person name="Town C.D."/>
        </authorList>
    </citation>
    <scope>GENOME REANNOTATION</scope>
    <source>
        <strain>cv. Columbia</strain>
    </source>
</reference>
<reference key="3">
    <citation type="submission" date="2002-03" db="EMBL/GenBank/DDBJ databases">
        <title>Full-length cDNA from Arabidopsis thaliana.</title>
        <authorList>
            <person name="Brover V.V."/>
            <person name="Troukhan M.E."/>
            <person name="Alexandrov N.A."/>
            <person name="Lu Y.-P."/>
            <person name="Flavell R.B."/>
            <person name="Feldmann K.A."/>
        </authorList>
    </citation>
    <scope>NUCLEOTIDE SEQUENCE [LARGE SCALE MRNA]</scope>
</reference>